<evidence type="ECO:0000255" key="1">
    <source>
        <dbReference type="HAMAP-Rule" id="MF_01631"/>
    </source>
</evidence>
<feature type="chain" id="PRO_0000233852" description="Bifunctional protein GlmU">
    <location>
        <begin position="1"/>
        <end position="460"/>
    </location>
</feature>
<feature type="region of interest" description="Pyrophosphorylase" evidence="1">
    <location>
        <begin position="1"/>
        <end position="229"/>
    </location>
</feature>
<feature type="region of interest" description="Linker" evidence="1">
    <location>
        <begin position="230"/>
        <end position="250"/>
    </location>
</feature>
<feature type="region of interest" description="N-acetyltransferase" evidence="1">
    <location>
        <begin position="251"/>
        <end position="460"/>
    </location>
</feature>
<feature type="active site" description="Proton acceptor" evidence="1">
    <location>
        <position position="362"/>
    </location>
</feature>
<feature type="binding site" evidence="1">
    <location>
        <begin position="8"/>
        <end position="11"/>
    </location>
    <ligand>
        <name>UDP-N-acetyl-alpha-D-glucosamine</name>
        <dbReference type="ChEBI" id="CHEBI:57705"/>
    </ligand>
</feature>
<feature type="binding site" evidence="1">
    <location>
        <position position="22"/>
    </location>
    <ligand>
        <name>UDP-N-acetyl-alpha-D-glucosamine</name>
        <dbReference type="ChEBI" id="CHEBI:57705"/>
    </ligand>
</feature>
<feature type="binding site" evidence="1">
    <location>
        <position position="72"/>
    </location>
    <ligand>
        <name>UDP-N-acetyl-alpha-D-glucosamine</name>
        <dbReference type="ChEBI" id="CHEBI:57705"/>
    </ligand>
</feature>
<feature type="binding site" evidence="1">
    <location>
        <begin position="77"/>
        <end position="78"/>
    </location>
    <ligand>
        <name>UDP-N-acetyl-alpha-D-glucosamine</name>
        <dbReference type="ChEBI" id="CHEBI:57705"/>
    </ligand>
</feature>
<feature type="binding site" evidence="1">
    <location>
        <position position="102"/>
    </location>
    <ligand>
        <name>Mg(2+)</name>
        <dbReference type="ChEBI" id="CHEBI:18420"/>
    </ligand>
</feature>
<feature type="binding site" evidence="1">
    <location>
        <position position="139"/>
    </location>
    <ligand>
        <name>UDP-N-acetyl-alpha-D-glucosamine</name>
        <dbReference type="ChEBI" id="CHEBI:57705"/>
    </ligand>
</feature>
<feature type="binding site" evidence="1">
    <location>
        <position position="154"/>
    </location>
    <ligand>
        <name>UDP-N-acetyl-alpha-D-glucosamine</name>
        <dbReference type="ChEBI" id="CHEBI:57705"/>
    </ligand>
</feature>
<feature type="binding site" evidence="1">
    <location>
        <position position="169"/>
    </location>
    <ligand>
        <name>UDP-N-acetyl-alpha-D-glucosamine</name>
        <dbReference type="ChEBI" id="CHEBI:57705"/>
    </ligand>
</feature>
<feature type="binding site" evidence="1">
    <location>
        <position position="227"/>
    </location>
    <ligand>
        <name>Mg(2+)</name>
        <dbReference type="ChEBI" id="CHEBI:18420"/>
    </ligand>
</feature>
<feature type="binding site" evidence="1">
    <location>
        <position position="227"/>
    </location>
    <ligand>
        <name>UDP-N-acetyl-alpha-D-glucosamine</name>
        <dbReference type="ChEBI" id="CHEBI:57705"/>
    </ligand>
</feature>
<feature type="binding site" evidence="1">
    <location>
        <position position="332"/>
    </location>
    <ligand>
        <name>UDP-N-acetyl-alpha-D-glucosamine</name>
        <dbReference type="ChEBI" id="CHEBI:57705"/>
    </ligand>
</feature>
<feature type="binding site" evidence="1">
    <location>
        <position position="350"/>
    </location>
    <ligand>
        <name>UDP-N-acetyl-alpha-D-glucosamine</name>
        <dbReference type="ChEBI" id="CHEBI:57705"/>
    </ligand>
</feature>
<feature type="binding site" evidence="1">
    <location>
        <position position="365"/>
    </location>
    <ligand>
        <name>UDP-N-acetyl-alpha-D-glucosamine</name>
        <dbReference type="ChEBI" id="CHEBI:57705"/>
    </ligand>
</feature>
<feature type="binding site" evidence="1">
    <location>
        <position position="376"/>
    </location>
    <ligand>
        <name>UDP-N-acetyl-alpha-D-glucosamine</name>
        <dbReference type="ChEBI" id="CHEBI:57705"/>
    </ligand>
</feature>
<feature type="binding site" evidence="1">
    <location>
        <position position="379"/>
    </location>
    <ligand>
        <name>acetyl-CoA</name>
        <dbReference type="ChEBI" id="CHEBI:57288"/>
    </ligand>
</feature>
<feature type="binding site" evidence="1">
    <location>
        <begin position="385"/>
        <end position="386"/>
    </location>
    <ligand>
        <name>acetyl-CoA</name>
        <dbReference type="ChEBI" id="CHEBI:57288"/>
    </ligand>
</feature>
<feature type="binding site" evidence="1">
    <location>
        <position position="404"/>
    </location>
    <ligand>
        <name>acetyl-CoA</name>
        <dbReference type="ChEBI" id="CHEBI:57288"/>
    </ligand>
</feature>
<feature type="binding site" evidence="1">
    <location>
        <position position="422"/>
    </location>
    <ligand>
        <name>acetyl-CoA</name>
        <dbReference type="ChEBI" id="CHEBI:57288"/>
    </ligand>
</feature>
<feature type="binding site" evidence="1">
    <location>
        <position position="439"/>
    </location>
    <ligand>
        <name>acetyl-CoA</name>
        <dbReference type="ChEBI" id="CHEBI:57288"/>
    </ligand>
</feature>
<dbReference type="EC" id="2.7.7.23" evidence="1"/>
<dbReference type="EC" id="2.3.1.157" evidence="1"/>
<dbReference type="EMBL" id="AE004092">
    <property type="protein sequence ID" value="AAK33462.1"/>
    <property type="molecule type" value="Genomic_DNA"/>
</dbReference>
<dbReference type="EMBL" id="CP000017">
    <property type="protein sequence ID" value="AAZ50980.1"/>
    <property type="molecule type" value="Genomic_DNA"/>
</dbReference>
<dbReference type="RefSeq" id="NP_268741.1">
    <property type="nucleotide sequence ID" value="NC_002737.2"/>
</dbReference>
<dbReference type="SMR" id="Q9A163"/>
<dbReference type="PaxDb" id="1314-HKU360_00395"/>
<dbReference type="KEGG" id="spy:SPy_0443"/>
<dbReference type="KEGG" id="spz:M5005_Spy0362"/>
<dbReference type="PATRIC" id="fig|160490.10.peg.376"/>
<dbReference type="HOGENOM" id="CLU_029499_15_2_9"/>
<dbReference type="OMA" id="TAIVEHK"/>
<dbReference type="UniPathway" id="UPA00113">
    <property type="reaction ID" value="UER00532"/>
</dbReference>
<dbReference type="UniPathway" id="UPA00113">
    <property type="reaction ID" value="UER00533"/>
</dbReference>
<dbReference type="UniPathway" id="UPA00973"/>
<dbReference type="Proteomes" id="UP000000750">
    <property type="component" value="Chromosome"/>
</dbReference>
<dbReference type="GO" id="GO:0005737">
    <property type="term" value="C:cytoplasm"/>
    <property type="evidence" value="ECO:0007669"/>
    <property type="project" value="UniProtKB-SubCell"/>
</dbReference>
<dbReference type="GO" id="GO:0016020">
    <property type="term" value="C:membrane"/>
    <property type="evidence" value="ECO:0007669"/>
    <property type="project" value="GOC"/>
</dbReference>
<dbReference type="GO" id="GO:0019134">
    <property type="term" value="F:glucosamine-1-phosphate N-acetyltransferase activity"/>
    <property type="evidence" value="ECO:0007669"/>
    <property type="project" value="UniProtKB-UniRule"/>
</dbReference>
<dbReference type="GO" id="GO:0000287">
    <property type="term" value="F:magnesium ion binding"/>
    <property type="evidence" value="ECO:0007669"/>
    <property type="project" value="UniProtKB-UniRule"/>
</dbReference>
<dbReference type="GO" id="GO:0003977">
    <property type="term" value="F:UDP-N-acetylglucosamine diphosphorylase activity"/>
    <property type="evidence" value="ECO:0007669"/>
    <property type="project" value="UniProtKB-UniRule"/>
</dbReference>
<dbReference type="GO" id="GO:0000902">
    <property type="term" value="P:cell morphogenesis"/>
    <property type="evidence" value="ECO:0007669"/>
    <property type="project" value="UniProtKB-UniRule"/>
</dbReference>
<dbReference type="GO" id="GO:0071555">
    <property type="term" value="P:cell wall organization"/>
    <property type="evidence" value="ECO:0007669"/>
    <property type="project" value="UniProtKB-KW"/>
</dbReference>
<dbReference type="GO" id="GO:0009245">
    <property type="term" value="P:lipid A biosynthetic process"/>
    <property type="evidence" value="ECO:0007669"/>
    <property type="project" value="UniProtKB-UniRule"/>
</dbReference>
<dbReference type="GO" id="GO:0009252">
    <property type="term" value="P:peptidoglycan biosynthetic process"/>
    <property type="evidence" value="ECO:0007669"/>
    <property type="project" value="UniProtKB-UniRule"/>
</dbReference>
<dbReference type="GO" id="GO:0008360">
    <property type="term" value="P:regulation of cell shape"/>
    <property type="evidence" value="ECO:0007669"/>
    <property type="project" value="UniProtKB-KW"/>
</dbReference>
<dbReference type="GO" id="GO:0006048">
    <property type="term" value="P:UDP-N-acetylglucosamine biosynthetic process"/>
    <property type="evidence" value="ECO:0007669"/>
    <property type="project" value="UniProtKB-UniPathway"/>
</dbReference>
<dbReference type="CDD" id="cd02540">
    <property type="entry name" value="GT2_GlmU_N_bac"/>
    <property type="match status" value="1"/>
</dbReference>
<dbReference type="CDD" id="cd03353">
    <property type="entry name" value="LbH_GlmU_C"/>
    <property type="match status" value="1"/>
</dbReference>
<dbReference type="Gene3D" id="2.160.10.10">
    <property type="entry name" value="Hexapeptide repeat proteins"/>
    <property type="match status" value="1"/>
</dbReference>
<dbReference type="Gene3D" id="3.90.550.10">
    <property type="entry name" value="Spore Coat Polysaccharide Biosynthesis Protein SpsA, Chain A"/>
    <property type="match status" value="1"/>
</dbReference>
<dbReference type="HAMAP" id="MF_01631">
    <property type="entry name" value="GlmU"/>
    <property type="match status" value="1"/>
</dbReference>
<dbReference type="InterPro" id="IPR005882">
    <property type="entry name" value="Bifunctional_GlmU"/>
</dbReference>
<dbReference type="InterPro" id="IPR050065">
    <property type="entry name" value="GlmU-like"/>
</dbReference>
<dbReference type="InterPro" id="IPR038009">
    <property type="entry name" value="GlmU_C_LbH"/>
</dbReference>
<dbReference type="InterPro" id="IPR001451">
    <property type="entry name" value="Hexapep"/>
</dbReference>
<dbReference type="InterPro" id="IPR005835">
    <property type="entry name" value="NTP_transferase_dom"/>
</dbReference>
<dbReference type="InterPro" id="IPR029044">
    <property type="entry name" value="Nucleotide-diphossugar_trans"/>
</dbReference>
<dbReference type="InterPro" id="IPR011004">
    <property type="entry name" value="Trimer_LpxA-like_sf"/>
</dbReference>
<dbReference type="NCBIfam" id="TIGR01173">
    <property type="entry name" value="glmU"/>
    <property type="match status" value="1"/>
</dbReference>
<dbReference type="NCBIfam" id="NF010934">
    <property type="entry name" value="PRK14354.1"/>
    <property type="match status" value="1"/>
</dbReference>
<dbReference type="PANTHER" id="PTHR43584:SF3">
    <property type="entry name" value="BIFUNCTIONAL PROTEIN GLMU"/>
    <property type="match status" value="1"/>
</dbReference>
<dbReference type="PANTHER" id="PTHR43584">
    <property type="entry name" value="NUCLEOTIDYL TRANSFERASE"/>
    <property type="match status" value="1"/>
</dbReference>
<dbReference type="Pfam" id="PF00132">
    <property type="entry name" value="Hexapep"/>
    <property type="match status" value="1"/>
</dbReference>
<dbReference type="Pfam" id="PF00483">
    <property type="entry name" value="NTP_transferase"/>
    <property type="match status" value="1"/>
</dbReference>
<dbReference type="SUPFAM" id="SSF53448">
    <property type="entry name" value="Nucleotide-diphospho-sugar transferases"/>
    <property type="match status" value="1"/>
</dbReference>
<dbReference type="SUPFAM" id="SSF51161">
    <property type="entry name" value="Trimeric LpxA-like enzymes"/>
    <property type="match status" value="1"/>
</dbReference>
<protein>
    <recommendedName>
        <fullName evidence="1">Bifunctional protein GlmU</fullName>
    </recommendedName>
    <domain>
        <recommendedName>
            <fullName evidence="1">UDP-N-acetylglucosamine pyrophosphorylase</fullName>
            <ecNumber evidence="1">2.7.7.23</ecNumber>
        </recommendedName>
        <alternativeName>
            <fullName evidence="1">N-acetylglucosamine-1-phosphate uridyltransferase</fullName>
        </alternativeName>
    </domain>
    <domain>
        <recommendedName>
            <fullName evidence="1">Glucosamine-1-phosphate N-acetyltransferase</fullName>
            <ecNumber evidence="1">2.3.1.157</ecNumber>
        </recommendedName>
    </domain>
</protein>
<reference key="1">
    <citation type="journal article" date="2001" name="Proc. Natl. Acad. Sci. U.S.A.">
        <title>Complete genome sequence of an M1 strain of Streptococcus pyogenes.</title>
        <authorList>
            <person name="Ferretti J.J."/>
            <person name="McShan W.M."/>
            <person name="Ajdic D.J."/>
            <person name="Savic D.J."/>
            <person name="Savic G."/>
            <person name="Lyon K."/>
            <person name="Primeaux C."/>
            <person name="Sezate S."/>
            <person name="Suvorov A.N."/>
            <person name="Kenton S."/>
            <person name="Lai H.S."/>
            <person name="Lin S.P."/>
            <person name="Qian Y."/>
            <person name="Jia H.G."/>
            <person name="Najar F.Z."/>
            <person name="Ren Q."/>
            <person name="Zhu H."/>
            <person name="Song L."/>
            <person name="White J."/>
            <person name="Yuan X."/>
            <person name="Clifton S.W."/>
            <person name="Roe B.A."/>
            <person name="McLaughlin R.E."/>
        </authorList>
    </citation>
    <scope>NUCLEOTIDE SEQUENCE [LARGE SCALE GENOMIC DNA]</scope>
    <source>
        <strain>ATCC 700294 / SF370 / Serotype M1</strain>
    </source>
</reference>
<reference key="2">
    <citation type="journal article" date="2005" name="J. Infect. Dis.">
        <title>Evolutionary origin and emergence of a highly successful clone of serotype M1 group A Streptococcus involved multiple horizontal gene transfer events.</title>
        <authorList>
            <person name="Sumby P."/>
            <person name="Porcella S.F."/>
            <person name="Madrigal A.G."/>
            <person name="Barbian K.D."/>
            <person name="Virtaneva K."/>
            <person name="Ricklefs S.M."/>
            <person name="Sturdevant D.E."/>
            <person name="Graham M.R."/>
            <person name="Vuopio-Varkila J."/>
            <person name="Hoe N.P."/>
            <person name="Musser J.M."/>
        </authorList>
    </citation>
    <scope>NUCLEOTIDE SEQUENCE [LARGE SCALE GENOMIC DNA]</scope>
    <source>
        <strain>ATCC BAA-947 / MGAS5005 / Serotype M1</strain>
    </source>
</reference>
<comment type="function">
    <text evidence="1">Catalyzes the last two sequential reactions in the de novo biosynthetic pathway for UDP-N-acetylglucosamine (UDP-GlcNAc). The C-terminal domain catalyzes the transfer of acetyl group from acetyl coenzyme A to glucosamine-1-phosphate (GlcN-1-P) to produce N-acetylglucosamine-1-phosphate (GlcNAc-1-P), which is converted into UDP-GlcNAc by the transfer of uridine 5-monophosphate (from uridine 5-triphosphate), a reaction catalyzed by the N-terminal domain.</text>
</comment>
<comment type="catalytic activity">
    <reaction evidence="1">
        <text>alpha-D-glucosamine 1-phosphate + acetyl-CoA = N-acetyl-alpha-D-glucosamine 1-phosphate + CoA + H(+)</text>
        <dbReference type="Rhea" id="RHEA:13725"/>
        <dbReference type="ChEBI" id="CHEBI:15378"/>
        <dbReference type="ChEBI" id="CHEBI:57287"/>
        <dbReference type="ChEBI" id="CHEBI:57288"/>
        <dbReference type="ChEBI" id="CHEBI:57776"/>
        <dbReference type="ChEBI" id="CHEBI:58516"/>
        <dbReference type="EC" id="2.3.1.157"/>
    </reaction>
</comment>
<comment type="catalytic activity">
    <reaction evidence="1">
        <text>N-acetyl-alpha-D-glucosamine 1-phosphate + UTP + H(+) = UDP-N-acetyl-alpha-D-glucosamine + diphosphate</text>
        <dbReference type="Rhea" id="RHEA:13509"/>
        <dbReference type="ChEBI" id="CHEBI:15378"/>
        <dbReference type="ChEBI" id="CHEBI:33019"/>
        <dbReference type="ChEBI" id="CHEBI:46398"/>
        <dbReference type="ChEBI" id="CHEBI:57705"/>
        <dbReference type="ChEBI" id="CHEBI:57776"/>
        <dbReference type="EC" id="2.7.7.23"/>
    </reaction>
</comment>
<comment type="cofactor">
    <cofactor evidence="1">
        <name>Mg(2+)</name>
        <dbReference type="ChEBI" id="CHEBI:18420"/>
    </cofactor>
    <text evidence="1">Binds 1 Mg(2+) ion per subunit.</text>
</comment>
<comment type="pathway">
    <text evidence="1">Nucleotide-sugar biosynthesis; UDP-N-acetyl-alpha-D-glucosamine biosynthesis; N-acetyl-alpha-D-glucosamine 1-phosphate from alpha-D-glucosamine 6-phosphate (route II): step 2/2.</text>
</comment>
<comment type="pathway">
    <text evidence="1">Nucleotide-sugar biosynthesis; UDP-N-acetyl-alpha-D-glucosamine biosynthesis; UDP-N-acetyl-alpha-D-glucosamine from N-acetyl-alpha-D-glucosamine 1-phosphate: step 1/1.</text>
</comment>
<comment type="pathway">
    <text evidence="1">Bacterial outer membrane biogenesis; LPS lipid A biosynthesis.</text>
</comment>
<comment type="subunit">
    <text evidence="1">Homotrimer.</text>
</comment>
<comment type="subcellular location">
    <subcellularLocation>
        <location evidence="1">Cytoplasm</location>
    </subcellularLocation>
</comment>
<comment type="similarity">
    <text evidence="1">In the N-terminal section; belongs to the N-acetylglucosamine-1-phosphate uridyltransferase family.</text>
</comment>
<comment type="similarity">
    <text evidence="1">In the C-terminal section; belongs to the transferase hexapeptide repeat family.</text>
</comment>
<organism>
    <name type="scientific">Streptococcus pyogenes serotype M1</name>
    <dbReference type="NCBI Taxonomy" id="301447"/>
    <lineage>
        <taxon>Bacteria</taxon>
        <taxon>Bacillati</taxon>
        <taxon>Bacillota</taxon>
        <taxon>Bacilli</taxon>
        <taxon>Lactobacillales</taxon>
        <taxon>Streptococcaceae</taxon>
        <taxon>Streptococcus</taxon>
    </lineage>
</organism>
<name>GLMU_STRP1</name>
<keyword id="KW-0012">Acyltransferase</keyword>
<keyword id="KW-0133">Cell shape</keyword>
<keyword id="KW-0961">Cell wall biogenesis/degradation</keyword>
<keyword id="KW-0963">Cytoplasm</keyword>
<keyword id="KW-0460">Magnesium</keyword>
<keyword id="KW-0479">Metal-binding</keyword>
<keyword id="KW-0511">Multifunctional enzyme</keyword>
<keyword id="KW-0548">Nucleotidyltransferase</keyword>
<keyword id="KW-0573">Peptidoglycan synthesis</keyword>
<keyword id="KW-1185">Reference proteome</keyword>
<keyword id="KW-0677">Repeat</keyword>
<keyword id="KW-0808">Transferase</keyword>
<gene>
    <name evidence="1" type="primary">glmU</name>
    <name type="ordered locus">SPy_0443</name>
    <name type="ordered locus">M5005_Spy0362</name>
</gene>
<proteinExistence type="inferred from homology"/>
<sequence length="460" mass="49689">MTNYAIILAAGKGTRMTSDLPKVLHKVSGLTMLEHVFRSVKAISPEKSVTVIGHKSEMVRAVLADQSAFVHQTEQLGTGHAVMMAETQLEGLEGHTLVIAGDTPLITGESLKSLIDFHVNHKNVATILTATAQDPFGYGRIVRNKDGEVIKIVEQKDANEYEQQLKEINTGTYVFDNKRLFEALKCITTNNAQGEYYLTDVVAIFRANKEKVGAYILRDFNESLGVNDRVALAIAETVMRQRITQKHMVNGVTFQNPETVYIESDVEIAPDVLIEGNVTLKGRTHIGSGTVLTNGTYIVDSEIGDNCVVTNSMIESSVLAAGVTVGPYAHLRPGTTLDREVHIGNFVEVKGSHIGEKTKAGHLTYIGNAQVGSSVNVGAGTITVNYDGQNKYETVIGDHAFIGSNSTLIAPLEVGDHALTAAGSTISKTVPIDSIAIGRSRQVTKEGYAKRLAHHPSRSK</sequence>
<accession>Q9A163</accession>
<accession>Q490I8</accession>